<proteinExistence type="evidence at protein level"/>
<comment type="function">
    <text>May act as a neurotransmitter or neuromodulator.</text>
</comment>
<comment type="subcellular location">
    <subcellularLocation>
        <location>Secreted</location>
    </subcellularLocation>
</comment>
<comment type="similarity">
    <text evidence="2">Belongs to the allatostatin family.</text>
</comment>
<protein>
    <recommendedName>
        <fullName>Carcinustatin-2</fullName>
    </recommendedName>
</protein>
<evidence type="ECO:0000269" key="1">
    <source>
    </source>
</evidence>
<evidence type="ECO:0000305" key="2"/>
<dbReference type="GO" id="GO:0005576">
    <property type="term" value="C:extracellular region"/>
    <property type="evidence" value="ECO:0007669"/>
    <property type="project" value="UniProtKB-SubCell"/>
</dbReference>
<dbReference type="GO" id="GO:0007218">
    <property type="term" value="P:neuropeptide signaling pathway"/>
    <property type="evidence" value="ECO:0007669"/>
    <property type="project" value="UniProtKB-KW"/>
</dbReference>
<name>ALL2_CARMA</name>
<accession>P81805</accession>
<reference key="1">
    <citation type="journal article" date="1997" name="Eur. J. Biochem.">
        <title>Isolation and identification of multiple neuropeptides of the allatostatin superfamily in the shore crab Carcinus maenas.</title>
        <authorList>
            <person name="Duve H."/>
            <person name="Johnsen A.H."/>
            <person name="Maestro J.-L."/>
            <person name="Scott A.G."/>
            <person name="Jaros P.P."/>
            <person name="Thorpe A."/>
        </authorList>
    </citation>
    <scope>PROTEIN SEQUENCE</scope>
    <scope>AMIDATION AT LEU-7</scope>
    <source>
        <tissue>Cerebral ganglion</tissue>
        <tissue>Thoracic ganglion</tissue>
    </source>
</reference>
<keyword id="KW-0027">Amidation</keyword>
<keyword id="KW-0903">Direct protein sequencing</keyword>
<keyword id="KW-0527">Neuropeptide</keyword>
<keyword id="KW-0964">Secreted</keyword>
<sequence length="7" mass="770">EAYAFGL</sequence>
<feature type="peptide" id="PRO_0000043459" description="Carcinustatin-2">
    <location>
        <begin position="1"/>
        <end position="7"/>
    </location>
</feature>
<feature type="modified residue" description="Leucine amide" evidence="1">
    <location>
        <position position="7"/>
    </location>
</feature>
<organism>
    <name type="scientific">Carcinus maenas</name>
    <name type="common">Common shore crab</name>
    <name type="synonym">Green crab</name>
    <dbReference type="NCBI Taxonomy" id="6759"/>
    <lineage>
        <taxon>Eukaryota</taxon>
        <taxon>Metazoa</taxon>
        <taxon>Ecdysozoa</taxon>
        <taxon>Arthropoda</taxon>
        <taxon>Crustacea</taxon>
        <taxon>Multicrustacea</taxon>
        <taxon>Malacostraca</taxon>
        <taxon>Eumalacostraca</taxon>
        <taxon>Eucarida</taxon>
        <taxon>Decapoda</taxon>
        <taxon>Pleocyemata</taxon>
        <taxon>Brachyura</taxon>
        <taxon>Eubrachyura</taxon>
        <taxon>Portunoidea</taxon>
        <taxon>Carcinidae</taxon>
        <taxon>Carcinus</taxon>
    </lineage>
</organism>